<feature type="chain" id="PRO_0000390717" description="Dual specificity tyrosine-phosphorylation-regulated kinase mbk-2">
    <location>
        <begin position="1"/>
        <end position="817"/>
    </location>
</feature>
<feature type="domain" description="Protein kinase" evidence="4">
    <location>
        <begin position="461"/>
        <end position="774"/>
    </location>
</feature>
<feature type="region of interest" description="Disordered" evidence="6">
    <location>
        <begin position="1"/>
        <end position="46"/>
    </location>
</feature>
<feature type="region of interest" description="Disordered" evidence="6">
    <location>
        <begin position="70"/>
        <end position="148"/>
    </location>
</feature>
<feature type="region of interest" description="Disordered" evidence="6">
    <location>
        <begin position="186"/>
        <end position="206"/>
    </location>
</feature>
<feature type="region of interest" description="Disordered" evidence="6">
    <location>
        <begin position="301"/>
        <end position="396"/>
    </location>
</feature>
<feature type="compositionally biased region" description="Polar residues" evidence="6">
    <location>
        <begin position="7"/>
        <end position="25"/>
    </location>
</feature>
<feature type="compositionally biased region" description="Low complexity" evidence="6">
    <location>
        <begin position="70"/>
        <end position="81"/>
    </location>
</feature>
<feature type="compositionally biased region" description="Low complexity" evidence="6">
    <location>
        <begin position="97"/>
        <end position="111"/>
    </location>
</feature>
<feature type="compositionally biased region" description="Polar residues" evidence="6">
    <location>
        <begin position="122"/>
        <end position="143"/>
    </location>
</feature>
<feature type="compositionally biased region" description="Polar residues" evidence="6">
    <location>
        <begin position="193"/>
        <end position="206"/>
    </location>
</feature>
<feature type="compositionally biased region" description="Low complexity" evidence="6">
    <location>
        <begin position="303"/>
        <end position="318"/>
    </location>
</feature>
<feature type="compositionally biased region" description="Polar residues" evidence="6">
    <location>
        <begin position="327"/>
        <end position="351"/>
    </location>
</feature>
<feature type="compositionally biased region" description="Low complexity" evidence="6">
    <location>
        <begin position="364"/>
        <end position="392"/>
    </location>
</feature>
<feature type="active site" description="Proton acceptor" evidence="1 4 5">
    <location>
        <position position="587"/>
    </location>
</feature>
<feature type="binding site" evidence="1 4">
    <location>
        <begin position="467"/>
        <end position="475"/>
    </location>
    <ligand>
        <name>ATP</name>
        <dbReference type="ChEBI" id="CHEBI:30616"/>
    </ligand>
</feature>
<feature type="binding site" evidence="4 10 11 14">
    <location>
        <position position="490"/>
    </location>
    <ligand>
        <name>ATP</name>
        <dbReference type="ChEBI" id="CHEBI:30616"/>
    </ligand>
</feature>
<feature type="modified residue" description="Phosphoserine; by cdk-1" evidence="14">
    <location>
        <position position="362"/>
    </location>
</feature>
<feature type="modified residue" description="Phosphotyrosine; by autocatalysis" evidence="21">
    <location>
        <position position="621"/>
    </location>
</feature>
<feature type="splice variant" id="VSP_053181" description="In isoform d." evidence="19">
    <location>
        <begin position="1"/>
        <end position="327"/>
    </location>
</feature>
<feature type="splice variant" id="VSP_053182" description="In isoform e." evidence="19">
    <location>
        <begin position="1"/>
        <end position="301"/>
    </location>
</feature>
<feature type="splice variant" id="VSP_053625" description="In isoform f." evidence="20">
    <location>
        <begin position="1"/>
        <end position="297"/>
    </location>
</feature>
<feature type="splice variant" id="VSP_053183" description="In isoform a." evidence="19">
    <location>
        <begin position="1"/>
        <end position="294"/>
    </location>
</feature>
<feature type="splice variant" id="VSP_053626" description="In isoform h." evidence="20">
    <location>
        <begin position="1"/>
        <end position="282"/>
    </location>
</feature>
<feature type="splice variant" id="VSP_053627" description="In isoform g." evidence="20">
    <location>
        <begin position="148"/>
        <end position="164"/>
    </location>
</feature>
<feature type="splice variant" id="VSP_053184" description="In isoform a." evidence="19">
    <original>AAQATGLPNVGTSSSN</original>
    <variation>MTLFEPSTSGNRMGYR</variation>
    <location>
        <begin position="295"/>
        <end position="310"/>
    </location>
</feature>
<feature type="splice variant" id="VSP_053628" description="In isoform f." evidence="20">
    <original>ATGLPNVGTSSSN</original>
    <variation>MFAIPFHRFYSDE</variation>
    <location>
        <begin position="298"/>
        <end position="310"/>
    </location>
</feature>
<feature type="splice variant" id="VSP_053185" description="In isoform e." evidence="19">
    <original>PNVGTSSSN</original>
    <variation>MYSSLFELR</variation>
    <location>
        <begin position="302"/>
        <end position="310"/>
    </location>
</feature>
<feature type="splice variant" id="VSP_053186" description="In isoform a, isoform d and isoform e." evidence="19">
    <original>KKTETLPNIDSNANILMRKKF</original>
    <variation>VCFIIF</variation>
    <location>
        <begin position="797"/>
        <end position="817"/>
    </location>
</feature>
<feature type="splice variant" id="VSP_053187" description="In isoform c." evidence="17 19">
    <location>
        <begin position="797"/>
        <end position="817"/>
    </location>
</feature>
<feature type="splice variant" id="VSP_053629" description="In isoform f." evidence="20">
    <original>KKTETL</original>
    <variation>VCFIIF</variation>
    <location>
        <begin position="797"/>
        <end position="802"/>
    </location>
</feature>
<feature type="splice variant" id="VSP_053630" description="In isoform f." evidence="20">
    <location>
        <begin position="803"/>
        <end position="817"/>
    </location>
</feature>
<feature type="mutagenesis site" description="Loss of phosphorylation by cdk-1. Loss of kinase activity." evidence="14">
    <original>S</original>
    <variation>A</variation>
    <location>
        <position position="362"/>
    </location>
</feature>
<feature type="mutagenesis site" description="Constitutively active." evidence="14">
    <original>S</original>
    <variation>E</variation>
    <location>
        <position position="362"/>
    </location>
</feature>
<feature type="mutagenesis site" description="Loss of autophosphorylation activity. Slight loss of binding to egg-4 and egg-5." evidence="10 11 14">
    <original>K</original>
    <variation>R</variation>
    <location>
        <position position="490"/>
    </location>
</feature>
<feature type="mutagenesis site" description="Reduced binding to egg-4 and egg-5 and translocation to the cytoplasm; when associated with F-621." evidence="14">
    <original>Y</original>
    <variation>F</variation>
    <location>
        <position position="619"/>
    </location>
</feature>
<feature type="mutagenesis site" description="Loss of tyrosine phosphorylation. Reduced binding to egg-4 and egg-5 and translocation to the cytoplasm; when associated with F-619." evidence="14">
    <original>Y</original>
    <variation>F</variation>
    <location>
        <position position="621"/>
    </location>
</feature>
<feature type="mutagenesis site" description="No loss of phosphorylation by cdk-1." evidence="14">
    <original>T</original>
    <variation>A</variation>
    <location>
        <position position="764"/>
    </location>
</feature>
<accession>Q9XTF3</accession>
<accession>H9G2V8</accession>
<accession>H9G2V9</accession>
<accession>J7SF89</accession>
<accession>Q20604</accession>
<accession>Q27GP3</accession>
<accession>Q2EEP1</accession>
<accession>Q9TVF4</accession>
<organism>
    <name type="scientific">Caenorhabditis elegans</name>
    <dbReference type="NCBI Taxonomy" id="6239"/>
    <lineage>
        <taxon>Eukaryota</taxon>
        <taxon>Metazoa</taxon>
        <taxon>Ecdysozoa</taxon>
        <taxon>Nematoda</taxon>
        <taxon>Chromadorea</taxon>
        <taxon>Rhabditida</taxon>
        <taxon>Rhabditina</taxon>
        <taxon>Rhabditomorpha</taxon>
        <taxon>Rhabditoidea</taxon>
        <taxon>Rhabditidae</taxon>
        <taxon>Peloderinae</taxon>
        <taxon>Caenorhabditis</taxon>
    </lineage>
</organism>
<reference evidence="20 22" key="1">
    <citation type="journal article" date="2003" name="Genetics">
        <title>Characterization of Caenorhabditis elegans homologs of the Down syndrome candidate gene DYRK1A.</title>
        <authorList>
            <person name="Raich W.B."/>
            <person name="Moorman C."/>
            <person name="Lacefield C.O."/>
            <person name="Lehrer J."/>
            <person name="Bartsch D."/>
            <person name="Plasterk R.H."/>
            <person name="Kandel E.R."/>
            <person name="Hobert O."/>
        </authorList>
    </citation>
    <scope>NUCLEOTIDE SEQUENCE [MRNA] (ISOFORM C)</scope>
    <scope>SUBCELLULAR LOCATION</scope>
    <scope>TISSUE SPECIFICITY</scope>
    <scope>DEVELOPMENTAL STAGE</scope>
    <scope>DISRUPTION PHENOTYPE</scope>
</reference>
<reference evidence="20 23" key="2">
    <citation type="journal article" date="1998" name="Science">
        <title>Genome sequence of the nematode C. elegans: a platform for investigating biology.</title>
        <authorList>
            <consortium name="The C. elegans sequencing consortium"/>
        </authorList>
    </citation>
    <scope>NUCLEOTIDE SEQUENCE [LARGE SCALE GENOMIC DNA]</scope>
    <scope>ALTERNATIVE SPLICING</scope>
    <source>
        <strain evidence="23">Bristol N2</strain>
    </source>
</reference>
<reference evidence="20" key="3">
    <citation type="journal article" date="2004" name="Dev. Biol.">
        <title>The minibrain kinase homolog, mbk-2, is required for spindle positioning and asymmetric cell division in early C. elegans embryos.</title>
        <authorList>
            <person name="Pang K.M."/>
            <person name="Ishidate T."/>
            <person name="Nakamura K."/>
            <person name="Shirayama M."/>
            <person name="Trzepacz C."/>
            <person name="Schubert C.M."/>
            <person name="Priess J.R."/>
            <person name="Mello C.C."/>
        </authorList>
    </citation>
    <scope>FUNCTION</scope>
    <scope>DISRUPTION PHENOTYPE</scope>
</reference>
<reference key="4">
    <citation type="journal article" date="2005" name="Dev. Biol.">
        <title>DYRK2 and GSK-3 phosphorylate and promote the timely degradation of OMA-1, a key regulator of the oocyte-to-embryo transition in C. elegans.</title>
        <authorList>
            <person name="Nishi Y."/>
            <person name="Lin R."/>
        </authorList>
    </citation>
    <scope>FUNCTION</scope>
    <scope>DISRUPTION PHENOTYPE</scope>
</reference>
<reference key="5">
    <citation type="journal article" date="2006" name="Curr. Biol.">
        <title>The C. elegans DYRK Kinase MBK-2 marks oocyte proteins for degradation in response to meiotic maturation.</title>
        <authorList>
            <person name="Stitzel M.L."/>
            <person name="Pellettieri J."/>
            <person name="Seydoux G."/>
        </authorList>
    </citation>
    <scope>FUNCTION</scope>
    <scope>SUBCELLULAR LOCATION</scope>
    <scope>MUTAGENESIS OF LYS-490</scope>
</reference>
<reference key="6">
    <citation type="journal article" date="2007" name="Curr. Biol.">
        <title>Regulation of MBK-2/Dyrk kinase by dynamic cortical anchoring during the oocyte-to-zygote transition.</title>
        <authorList>
            <person name="Stitzel M.L."/>
            <person name="Cheng K.C."/>
            <person name="Seydoux G."/>
        </authorList>
    </citation>
    <scope>FUNCTION</scope>
    <scope>CATALYTIC ACTIVITY</scope>
    <scope>COFACTOR</scope>
    <scope>INTERACTION WITH EGG-3</scope>
    <scope>SUBCELLULAR LOCATION</scope>
    <scope>MUTAGENESIS OF LYS-490</scope>
</reference>
<reference key="7">
    <citation type="journal article" date="2008" name="Cell">
        <title>Global transcriptional repression in C. elegans germline precursors by regulated sequestration of TAF-4.</title>
        <authorList>
            <person name="Guven-Ozkan T."/>
            <person name="Nishi Y."/>
            <person name="Robertson S.M."/>
            <person name="Lin R."/>
        </authorList>
    </citation>
    <scope>FUNCTION</scope>
    <scope>DISRUPTION PHENOTYPE</scope>
</reference>
<reference key="8">
    <citation type="journal article" date="2008" name="Development">
        <title>Polo kinases regulate C. elegans embryonic polarity via binding to DYRK2-primed MEX-5 and MEX-6.</title>
        <authorList>
            <person name="Nishi Y."/>
            <person name="Rogers E."/>
            <person name="Robertson S.M."/>
            <person name="Lin R."/>
        </authorList>
    </citation>
    <scope>FUNCTION</scope>
    <scope>CATALYTIC ACTIVITY</scope>
    <scope>COFACTOR</scope>
    <scope>DISRUPTION PHENOTYPE</scope>
</reference>
<reference key="9">
    <citation type="journal article" date="2009" name="Cell">
        <title>Regulation of MBK-2/DYRK by CDK-1 and the pseudophosphatases EGG-4 and EGG-5 during the oocyte-to-embryo transition.</title>
        <authorList>
            <person name="Cheng K.C."/>
            <person name="Klancer R."/>
            <person name="Singson A."/>
            <person name="Seydoux G."/>
        </authorList>
    </citation>
    <scope>FUNCTION</scope>
    <scope>CATALYTIC ACTIVITY</scope>
    <scope>COFACTOR</scope>
    <scope>ACTIVITY REGULATION</scope>
    <scope>BIOPHYSICOCHEMICAL PROPERTIES</scope>
    <scope>IDENTIFICATION IN A COMPLEX WITH EGG-3; EGG-4 AND EGG-5</scope>
    <scope>INTERACTION WITH EGG-3; EGG-4 AND EGG-5</scope>
    <scope>SUBCELLULAR LOCATION</scope>
    <scope>AUTOPHOSPHORYLATION</scope>
    <scope>PHOSPHORYLATION AT SER-362 AND TYR-621</scope>
    <scope>MUTAGENESIS OF SER-362; LYS-490; TYR-619; TYR-621 AND THR-764</scope>
</reference>
<reference key="10">
    <citation type="journal article" date="2014" name="Elife">
        <title>Regulation of RNA granule dynamics by phosphorylation of serine-rich, intrinsically disordered proteins in C. elegans.</title>
        <authorList>
            <person name="Wang J.T."/>
            <person name="Smith J."/>
            <person name="Chen B.C."/>
            <person name="Schmidt H."/>
            <person name="Rasoloson D."/>
            <person name="Paix A."/>
            <person name="Lambrus B.G."/>
            <person name="Calidas D."/>
            <person name="Betzig E."/>
            <person name="Seydoux G."/>
        </authorList>
    </citation>
    <scope>FUNCTION</scope>
    <scope>CATALYTIC ACTIVITY</scope>
    <scope>DISRUPTION PHENOTYPE</scope>
</reference>
<comment type="function">
    <text evidence="8 9 10 11 12 13 14 15">Required for oocyte-to-zygote transition in which it phosphorylates oocyte proteins, including mei-1, oma-1, oma-2, mex-5, and mex-6, modifying their activity and/or stability following meiosis (PubMed:16289132, PubMed:16338136, PubMed:17869113, PubMed:18199581, PubMed:18854162, PubMed:19879842). Through phosphorylation of P granule components including meg-1, promotes the disassembly of zygotic P granules in the anterior cytoplasm during zygote polarization, and thus plays a role in P granule distribution and segregation in early stage embryos following meiosis (PubMed:25535836). Functions in both spindle positioning and in the posterior localization of cytoplasmic determinants, including pie-1, pos-1, and pgl-1, in early embryos (PubMed:14697358). Involved in the asymmetric distribution of plk-1 at the 2-cell embryonic stage (PubMed:18199581).</text>
</comment>
<comment type="catalytic activity">
    <reaction evidence="11 12 14 15">
        <text>L-seryl-[protein] + ATP = O-phospho-L-seryl-[protein] + ADP + H(+)</text>
        <dbReference type="Rhea" id="RHEA:17989"/>
        <dbReference type="Rhea" id="RHEA-COMP:9863"/>
        <dbReference type="Rhea" id="RHEA-COMP:11604"/>
        <dbReference type="ChEBI" id="CHEBI:15378"/>
        <dbReference type="ChEBI" id="CHEBI:29999"/>
        <dbReference type="ChEBI" id="CHEBI:30616"/>
        <dbReference type="ChEBI" id="CHEBI:83421"/>
        <dbReference type="ChEBI" id="CHEBI:456216"/>
        <dbReference type="EC" id="2.7.12.1"/>
    </reaction>
</comment>
<comment type="catalytic activity">
    <reaction evidence="11 12 14 15">
        <text>L-threonyl-[protein] + ATP = O-phospho-L-threonyl-[protein] + ADP + H(+)</text>
        <dbReference type="Rhea" id="RHEA:46608"/>
        <dbReference type="Rhea" id="RHEA-COMP:11060"/>
        <dbReference type="Rhea" id="RHEA-COMP:11605"/>
        <dbReference type="ChEBI" id="CHEBI:15378"/>
        <dbReference type="ChEBI" id="CHEBI:30013"/>
        <dbReference type="ChEBI" id="CHEBI:30616"/>
        <dbReference type="ChEBI" id="CHEBI:61977"/>
        <dbReference type="ChEBI" id="CHEBI:456216"/>
        <dbReference type="EC" id="2.7.12.1"/>
    </reaction>
</comment>
<comment type="catalytic activity">
    <reaction evidence="11 12 14">
        <text>L-tyrosyl-[protein] + ATP = O-phospho-L-tyrosyl-[protein] + ADP + H(+)</text>
        <dbReference type="Rhea" id="RHEA:10596"/>
        <dbReference type="Rhea" id="RHEA-COMP:10136"/>
        <dbReference type="Rhea" id="RHEA-COMP:20101"/>
        <dbReference type="ChEBI" id="CHEBI:15378"/>
        <dbReference type="ChEBI" id="CHEBI:30616"/>
        <dbReference type="ChEBI" id="CHEBI:46858"/>
        <dbReference type="ChEBI" id="CHEBI:61978"/>
        <dbReference type="ChEBI" id="CHEBI:456216"/>
        <dbReference type="EC" id="2.7.12.1"/>
    </reaction>
</comment>
<comment type="cofactor">
    <cofactor evidence="11 12 14">
        <name>Mg(2+)</name>
        <dbReference type="ChEBI" id="CHEBI:18420"/>
    </cofactor>
</comment>
<comment type="activity regulation">
    <text evidence="14">Activated during oocyte maturation by phosphorylation on Ser-362 by cdk-1. The pseudotyrosine phosphatases egg-4 and egg-5 sequester activated mbk-2 until the meiotic divisions and inhibit mbk-2 kinase activity directly, using a mixed-inhibition mechanism that does not involve tyrosine dephosphorylation.</text>
</comment>
<comment type="biophysicochemical properties">
    <kinetics>
        <KM evidence="14">0.3 uM for mei-1 (Isoform a)</KM>
        <text evidence="14">The presence of egg-4 in the assay increases the KM of mbk-2 for mei-1.</text>
    </kinetics>
</comment>
<comment type="subunit">
    <text evidence="11 14">Part of a complex, consisting of pseudophosphatases egg-3, egg-4, egg-5 and kinase mbk-2; this complex is required for the oocyte-to-zygote transition (PubMed:19879842). Interacts (via Tyr-619 and Tyr-621) with egg-4 (via tyrosine-protein phosphatase domain) and egg-5 (via tyrosine-protein phosphatase domain); mbk-2 tyrosine phosphorylation enhances the interaction (PubMed:19879842). The interaction inhibits mbk-2 kinase activity and is required for mbk-2 oocyte cortex localization. Interacts (via N-terminus) with egg-3 (via tyrosine-protein phosphatase domain); the interaction does not affect mbk-2 kinase activity, is enhanced by mbk-2 tyrosine phosphorylation status and requires prior binding of mbk-2 to egg-4 and egg-5 (PubMed:17869113, PubMed:19879842).</text>
</comment>
<comment type="interaction">
    <interactant intactId="EBI-2005616">
        <id>Q9XTF3</id>
    </interactant>
    <interactant intactId="EBI-2476895">
        <id>Q20402</id>
        <label>egg-3</label>
    </interactant>
    <organismsDiffer>false</organismsDiffer>
    <experiments>9</experiments>
</comment>
<comment type="interaction">
    <interactant intactId="EBI-2565597">
        <id>Q9XTF3-2</id>
    </interactant>
    <interactant intactId="EBI-323248">
        <id>P34808</id>
        <label>mei-1</label>
    </interactant>
    <organismsDiffer>false</organismsDiffer>
    <experiments>2</experiments>
</comment>
<comment type="subcellular location">
    <subcellularLocation>
        <location evidence="7 10 11 13">Cytoplasm</location>
        <location evidence="7 10 11 13">Cell cortex</location>
    </subcellularLocation>
    <text evidence="7 10 11 14">Maintained at the cortex by the cortical anchor egg-3 before meiotic divisions. During anaphase of meiosis I, egg-3 translocates into the cytoplasm on vesicles and is slowly degraded, releasing mbk-2.</text>
</comment>
<comment type="alternative products">
    <event type="alternative splicing"/>
    <isoform>
        <id>Q9XTF3-1</id>
        <name evidence="16">b</name>
        <sequence type="displayed"/>
    </isoform>
    <isoform>
        <id>Q9XTF3-2</id>
        <name evidence="16">a</name>
        <sequence type="described" ref="VSP_053183 VSP_053184 VSP_053186"/>
    </isoform>
    <isoform>
        <id>Q9XTF3-3</id>
        <name evidence="7 16">c</name>
        <sequence type="described" ref="VSP_053187"/>
    </isoform>
    <isoform>
        <id>Q9XTF3-4</id>
        <name evidence="16">d</name>
        <sequence type="described" ref="VSP_053181 VSP_053186"/>
    </isoform>
    <isoform>
        <id>Q9XTF3-5</id>
        <name evidence="16">e</name>
        <sequence type="described" ref="VSP_053182 VSP_053185 VSP_053186"/>
    </isoform>
    <isoform>
        <id>Q9XTF3-6</id>
        <name>f</name>
        <sequence type="described" ref="VSP_053625 VSP_053628 VSP_053629 VSP_053630"/>
    </isoform>
    <isoform>
        <id>Q9XTF3-7</id>
        <name>g</name>
        <sequence type="described" ref="VSP_053627"/>
    </isoform>
    <isoform>
        <id>Q9XTF3-8</id>
        <name>h</name>
        <sequence type="described" ref="VSP_053626"/>
    </isoform>
</comment>
<comment type="tissue specificity">
    <text evidence="7">In L1 larvae, expressed widely in the nervous system, including head neurons and the ventral nerve cord. In adult animals, continues to be expressed in the nervous system and is also expressed in body wall muscle.</text>
</comment>
<comment type="developmental stage">
    <text evidence="7">Expressed both maternally and zygotically.</text>
</comment>
<comment type="PTM">
    <text evidence="14">Autophosphorylated.</text>
</comment>
<comment type="disruption phenotype">
    <text evidence="7 8 9 12 13 15">Maternal-effect embryonic lethality due to defects in spindle positioning and cytokinesis in the early embryo (PubMed:12618396, PubMed:14697358). Microtubules are fragmented and disordered (PubMed:14697358). Abolishes phosphorylation of RNA-binding protein oma-1 in embryos (PubMed:16289132). RNAi-mediated knockdown causes an increase in taf-4 nuclear localization in the one-cell embryo (PubMed:18854162). RNAi-mediated knockdown causes a loss in plk-1 asymmetric localization in 2-cell stage embryo without affecting mex-5 polarization (PubMed:18199581). RNAi-mediated knockdown disrupts P granule distribution in zygotes after meiosis whereby zygotic P granules fail to disassemble in the anterior cytoplasm during zygote polarization, however new P granules assemble and accumulate in the posterior cytoplasm as in wild-type (PubMed:25535836).</text>
</comment>
<comment type="similarity">
    <text evidence="3">Belongs to the protein kinase superfamily. CMGC Ser/Thr protein kinase family. MNB/DYRK subfamily.</text>
</comment>
<protein>
    <recommendedName>
        <fullName evidence="2">Dual specificity tyrosine-phosphorylation-regulated kinase mbk-2</fullName>
        <ecNumber evidence="11 12 14 15">2.7.12.1</ecNumber>
    </recommendedName>
    <alternativeName>
        <fullName evidence="2">Dual specificity Yak1-related kinase mbk-2</fullName>
    </alternativeName>
    <alternativeName>
        <fullName evidence="18">Minibrain Kinase 2</fullName>
    </alternativeName>
</protein>
<gene>
    <name evidence="24" type="primary">mbk-2</name>
    <name evidence="24" type="ORF">F49E11.1</name>
</gene>
<dbReference type="EC" id="2.7.12.1" evidence="11 12 14 15"/>
<dbReference type="EMBL" id="AY090019">
    <property type="protein sequence ID" value="AAM09088.1"/>
    <property type="molecule type" value="mRNA"/>
</dbReference>
<dbReference type="EMBL" id="Z70308">
    <property type="protein sequence ID" value="CAA94352.1"/>
    <property type="molecule type" value="Genomic_DNA"/>
</dbReference>
<dbReference type="EMBL" id="Z70308">
    <property type="protein sequence ID" value="CAA94353.1"/>
    <property type="molecule type" value="Genomic_DNA"/>
</dbReference>
<dbReference type="EMBL" id="Z81121">
    <property type="protein sequence ID" value="CAA94353.1"/>
    <property type="status" value="JOINED"/>
    <property type="molecule type" value="Genomic_DNA"/>
</dbReference>
<dbReference type="EMBL" id="Z81146">
    <property type="protein sequence ID" value="CAA94353.1"/>
    <property type="status" value="JOINED"/>
    <property type="molecule type" value="Genomic_DNA"/>
</dbReference>
<dbReference type="EMBL" id="Z70308">
    <property type="protein sequence ID" value="CAB54254.2"/>
    <property type="molecule type" value="Genomic_DNA"/>
</dbReference>
<dbReference type="EMBL" id="Z81121">
    <property type="protein sequence ID" value="CAB54254.2"/>
    <property type="status" value="JOINED"/>
    <property type="molecule type" value="Genomic_DNA"/>
</dbReference>
<dbReference type="EMBL" id="Z81146">
    <property type="protein sequence ID" value="CAB54254.2"/>
    <property type="status" value="JOINED"/>
    <property type="molecule type" value="Genomic_DNA"/>
</dbReference>
<dbReference type="EMBL" id="Z70308">
    <property type="protein sequence ID" value="CAJ76942.1"/>
    <property type="molecule type" value="Genomic_DNA"/>
</dbReference>
<dbReference type="EMBL" id="Z70308">
    <property type="protein sequence ID" value="CAJ80814.1"/>
    <property type="molecule type" value="Genomic_DNA"/>
</dbReference>
<dbReference type="EMBL" id="Z81121">
    <property type="protein sequence ID" value="CAJ80814.1"/>
    <property type="status" value="JOINED"/>
    <property type="molecule type" value="Genomic_DNA"/>
</dbReference>
<dbReference type="EMBL" id="Z70308">
    <property type="protein sequence ID" value="CCG28133.1"/>
    <property type="molecule type" value="Genomic_DNA"/>
</dbReference>
<dbReference type="EMBL" id="Z81121">
    <property type="protein sequence ID" value="CCG28133.1"/>
    <property type="status" value="JOINED"/>
    <property type="molecule type" value="Genomic_DNA"/>
</dbReference>
<dbReference type="EMBL" id="Z81146">
    <property type="protein sequence ID" value="CCG28133.1"/>
    <property type="status" value="JOINED"/>
    <property type="molecule type" value="Genomic_DNA"/>
</dbReference>
<dbReference type="EMBL" id="Z70308">
    <property type="protein sequence ID" value="CCG28134.1"/>
    <property type="molecule type" value="Genomic_DNA"/>
</dbReference>
<dbReference type="EMBL" id="Z81121">
    <property type="protein sequence ID" value="CCG28134.1"/>
    <property type="status" value="JOINED"/>
    <property type="molecule type" value="Genomic_DNA"/>
</dbReference>
<dbReference type="EMBL" id="Z70308">
    <property type="protein sequence ID" value="CCM09396.1"/>
    <property type="molecule type" value="Genomic_DNA"/>
</dbReference>
<dbReference type="EMBL" id="Z81121">
    <property type="protein sequence ID" value="CCM09396.1"/>
    <property type="status" value="JOINED"/>
    <property type="molecule type" value="Genomic_DNA"/>
</dbReference>
<dbReference type="PIR" id="T22440">
    <property type="entry name" value="T22440"/>
</dbReference>
<dbReference type="PIR" id="T22442">
    <property type="entry name" value="T22442"/>
</dbReference>
<dbReference type="RefSeq" id="NP_001023207.1">
    <molecule id="Q9XTF3-1"/>
    <property type="nucleotide sequence ID" value="NM_001028036.5"/>
</dbReference>
<dbReference type="RefSeq" id="NP_001023208.1">
    <molecule id="Q9XTF3-3"/>
    <property type="nucleotide sequence ID" value="NM_001028037.4"/>
</dbReference>
<dbReference type="RefSeq" id="NP_001040950.1">
    <molecule id="Q9XTF3-4"/>
    <property type="nucleotide sequence ID" value="NM_001047485.5"/>
</dbReference>
<dbReference type="RefSeq" id="NP_001040951.1">
    <molecule id="Q9XTF3-5"/>
    <property type="nucleotide sequence ID" value="NM_001047486.4"/>
</dbReference>
<dbReference type="RefSeq" id="NP_001255694.1">
    <property type="nucleotide sequence ID" value="NM_001268765.1"/>
</dbReference>
<dbReference type="RefSeq" id="NP_001255695.1">
    <molecule id="Q9XTF3-6"/>
    <property type="nucleotide sequence ID" value="NM_001268766.4"/>
</dbReference>
<dbReference type="RefSeq" id="NP_001263802.1">
    <property type="nucleotide sequence ID" value="NM_001276873.1"/>
</dbReference>
<dbReference type="RefSeq" id="NP_001366773.1">
    <molecule id="Q9XTF3-2"/>
    <property type="nucleotide sequence ID" value="NM_001380500.1"/>
</dbReference>
<dbReference type="RefSeq" id="NP_001368118.1">
    <molecule id="Q9XTF3-7"/>
    <property type="nucleotide sequence ID" value="NM_001380497.1"/>
</dbReference>
<dbReference type="RefSeq" id="NP_001368149.1">
    <molecule id="Q9XTF3-8"/>
    <property type="nucleotide sequence ID" value="NM_001380498.1"/>
</dbReference>
<dbReference type="RefSeq" id="NP_502492.2">
    <property type="nucleotide sequence ID" value="NM_070091.6"/>
</dbReference>
<dbReference type="SMR" id="Q9XTF3"/>
<dbReference type="BioGRID" id="43342">
    <property type="interactions" value="132"/>
</dbReference>
<dbReference type="ComplexPortal" id="CPX-3381">
    <property type="entry name" value="Egg-3/4/5 MBK-2 complex"/>
</dbReference>
<dbReference type="FunCoup" id="Q9XTF3">
    <property type="interactions" value="154"/>
</dbReference>
<dbReference type="IntAct" id="Q9XTF3">
    <property type="interactions" value="11"/>
</dbReference>
<dbReference type="STRING" id="6239.F49E11.1b.1"/>
<dbReference type="iPTMnet" id="Q9XTF3"/>
<dbReference type="PaxDb" id="6239-F49E11.1b"/>
<dbReference type="PeptideAtlas" id="Q9XTF3"/>
<dbReference type="EnsemblMetazoa" id="F49E11.1a.1">
    <molecule id="Q9XTF3-2"/>
    <property type="protein sequence ID" value="F49E11.1a.1"/>
    <property type="gene ID" value="WBGene00003150"/>
</dbReference>
<dbReference type="EnsemblMetazoa" id="F49E11.1b.1">
    <molecule id="Q9XTF3-1"/>
    <property type="protein sequence ID" value="F49E11.1b.1"/>
    <property type="gene ID" value="WBGene00003150"/>
</dbReference>
<dbReference type="EnsemblMetazoa" id="F49E11.1c.1">
    <molecule id="Q9XTF3-3"/>
    <property type="protein sequence ID" value="F49E11.1c.1"/>
    <property type="gene ID" value="WBGene00003150"/>
</dbReference>
<dbReference type="EnsemblMetazoa" id="F49E11.1d.1">
    <molecule id="Q9XTF3-4"/>
    <property type="protein sequence ID" value="F49E11.1d.1"/>
    <property type="gene ID" value="WBGene00003150"/>
</dbReference>
<dbReference type="EnsemblMetazoa" id="F49E11.1e.1">
    <molecule id="Q9XTF3-5"/>
    <property type="protein sequence ID" value="F49E11.1e.1"/>
    <property type="gene ID" value="WBGene00003150"/>
</dbReference>
<dbReference type="EnsemblMetazoa" id="F49E11.1f.1">
    <molecule id="Q9XTF3-6"/>
    <property type="protein sequence ID" value="F49E11.1f.1"/>
    <property type="gene ID" value="WBGene00003150"/>
</dbReference>
<dbReference type="EnsemblMetazoa" id="F49E11.1g.1">
    <molecule id="Q9XTF3-7"/>
    <property type="protein sequence ID" value="F49E11.1g.1"/>
    <property type="gene ID" value="WBGene00003150"/>
</dbReference>
<dbReference type="EnsemblMetazoa" id="F49E11.1h.1">
    <molecule id="Q9XTF3-8"/>
    <property type="protein sequence ID" value="F49E11.1h.1"/>
    <property type="gene ID" value="WBGene00003150"/>
</dbReference>
<dbReference type="GeneID" id="178250"/>
<dbReference type="KEGG" id="cel:CELE_F49E11.1"/>
<dbReference type="UCSC" id="F49E11.1c">
    <property type="organism name" value="c. elegans"/>
</dbReference>
<dbReference type="AGR" id="WB:WBGene00003150"/>
<dbReference type="CTD" id="178250"/>
<dbReference type="WormBase" id="F49E11.1a">
    <molecule id="Q9XTF3-2"/>
    <property type="protein sequence ID" value="CE05897"/>
    <property type="gene ID" value="WBGene00003150"/>
    <property type="gene designation" value="mbk-2"/>
</dbReference>
<dbReference type="WormBase" id="F49E11.1b">
    <molecule id="Q9XTF3-1"/>
    <property type="protein sequence ID" value="CE19878"/>
    <property type="gene ID" value="WBGene00003150"/>
    <property type="gene designation" value="mbk-2"/>
</dbReference>
<dbReference type="WormBase" id="F49E11.1c">
    <molecule id="Q9XTF3-3"/>
    <property type="protein sequence ID" value="CE23751"/>
    <property type="gene ID" value="WBGene00003150"/>
    <property type="gene designation" value="mbk-2"/>
</dbReference>
<dbReference type="WormBase" id="F49E11.1d">
    <molecule id="Q9XTF3-4"/>
    <property type="protein sequence ID" value="CE39735"/>
    <property type="gene ID" value="WBGene00003150"/>
    <property type="gene designation" value="mbk-2"/>
</dbReference>
<dbReference type="WormBase" id="F49E11.1e">
    <molecule id="Q9XTF3-5"/>
    <property type="protein sequence ID" value="CE39938"/>
    <property type="gene ID" value="WBGene00003150"/>
    <property type="gene designation" value="mbk-2"/>
</dbReference>
<dbReference type="WormBase" id="F49E11.1f">
    <molecule id="Q9XTF3-6"/>
    <property type="protein sequence ID" value="CE47098"/>
    <property type="gene ID" value="WBGene00003150"/>
    <property type="gene designation" value="mbk-2"/>
</dbReference>
<dbReference type="WormBase" id="F49E11.1g">
    <molecule id="Q9XTF3-7"/>
    <property type="protein sequence ID" value="CE47427"/>
    <property type="gene ID" value="WBGene00003150"/>
    <property type="gene designation" value="mbk-2"/>
</dbReference>
<dbReference type="WormBase" id="F49E11.1h">
    <molecule id="Q9XTF3-8"/>
    <property type="protein sequence ID" value="CE47790"/>
    <property type="gene ID" value="WBGene00003150"/>
    <property type="gene designation" value="mbk-2"/>
</dbReference>
<dbReference type="eggNOG" id="KOG0667">
    <property type="taxonomic scope" value="Eukaryota"/>
</dbReference>
<dbReference type="GeneTree" id="ENSGT00940000166363"/>
<dbReference type="InParanoid" id="Q9XTF3"/>
<dbReference type="OMA" id="CTATSMP"/>
<dbReference type="OrthoDB" id="9332038at2759"/>
<dbReference type="PhylomeDB" id="Q9XTF3"/>
<dbReference type="SignaLink" id="Q9XTF3"/>
<dbReference type="PRO" id="PR:Q9XTF3"/>
<dbReference type="Proteomes" id="UP000001940">
    <property type="component" value="Chromosome IV"/>
</dbReference>
<dbReference type="Bgee" id="WBGene00003150">
    <property type="expression patterns" value="Expressed in pharyngeal muscle cell (C elegans) and 4 other cell types or tissues"/>
</dbReference>
<dbReference type="ExpressionAtlas" id="Q9XTF3">
    <property type="expression patterns" value="baseline and differential"/>
</dbReference>
<dbReference type="GO" id="GO:0005938">
    <property type="term" value="C:cell cortex"/>
    <property type="evidence" value="ECO:0000314"/>
    <property type="project" value="UniProtKB"/>
</dbReference>
<dbReference type="GO" id="GO:0005813">
    <property type="term" value="C:centrosome"/>
    <property type="evidence" value="ECO:0000314"/>
    <property type="project" value="WormBase"/>
</dbReference>
<dbReference type="GO" id="GO:0005694">
    <property type="term" value="C:chromosome"/>
    <property type="evidence" value="ECO:0000314"/>
    <property type="project" value="WormBase"/>
</dbReference>
<dbReference type="GO" id="GO:0000793">
    <property type="term" value="C:condensed chromosome"/>
    <property type="evidence" value="ECO:0000314"/>
    <property type="project" value="WormBase"/>
</dbReference>
<dbReference type="GO" id="GO:0005737">
    <property type="term" value="C:cytoplasm"/>
    <property type="evidence" value="ECO:0000314"/>
    <property type="project" value="UniProtKB"/>
</dbReference>
<dbReference type="GO" id="GO:0005856">
    <property type="term" value="C:cytoskeleton"/>
    <property type="evidence" value="ECO:0000318"/>
    <property type="project" value="GO_Central"/>
</dbReference>
<dbReference type="GO" id="GO:0072686">
    <property type="term" value="C:mitotic spindle"/>
    <property type="evidence" value="ECO:0000314"/>
    <property type="project" value="WormBase"/>
</dbReference>
<dbReference type="GO" id="GO:0005634">
    <property type="term" value="C:nucleus"/>
    <property type="evidence" value="ECO:0000318"/>
    <property type="project" value="GO_Central"/>
</dbReference>
<dbReference type="GO" id="GO:0043186">
    <property type="term" value="C:P granule"/>
    <property type="evidence" value="ECO:0000314"/>
    <property type="project" value="WormBase"/>
</dbReference>
<dbReference type="GO" id="GO:0005524">
    <property type="term" value="F:ATP binding"/>
    <property type="evidence" value="ECO:0000250"/>
    <property type="project" value="WormBase"/>
</dbReference>
<dbReference type="GO" id="GO:0004672">
    <property type="term" value="F:protein kinase activity"/>
    <property type="evidence" value="ECO:0000314"/>
    <property type="project" value="WormBase"/>
</dbReference>
<dbReference type="GO" id="GO:0106310">
    <property type="term" value="F:protein serine kinase activity"/>
    <property type="evidence" value="ECO:0007669"/>
    <property type="project" value="RHEA"/>
</dbReference>
<dbReference type="GO" id="GO:0004674">
    <property type="term" value="F:protein serine/threonine kinase activity"/>
    <property type="evidence" value="ECO:0000314"/>
    <property type="project" value="WormBase"/>
</dbReference>
<dbReference type="GO" id="GO:0004712">
    <property type="term" value="F:protein serine/threonine/tyrosine kinase activity"/>
    <property type="evidence" value="ECO:0007669"/>
    <property type="project" value="UniProtKB-EC"/>
</dbReference>
<dbReference type="GO" id="GO:0004713">
    <property type="term" value="F:protein tyrosine kinase activity"/>
    <property type="evidence" value="ECO:0000315"/>
    <property type="project" value="UniProtKB"/>
</dbReference>
<dbReference type="GO" id="GO:0045167">
    <property type="term" value="P:asymmetric protein localization involved in cell fate determination"/>
    <property type="evidence" value="ECO:0000315"/>
    <property type="project" value="WormBase"/>
</dbReference>
<dbReference type="GO" id="GO:0009792">
    <property type="term" value="P:embryo development ending in birth or egg hatching"/>
    <property type="evidence" value="ECO:0000315"/>
    <property type="project" value="WormBase"/>
</dbReference>
<dbReference type="GO" id="GO:0009880">
    <property type="term" value="P:embryonic pattern specification"/>
    <property type="evidence" value="ECO:0000315"/>
    <property type="project" value="WormBase"/>
</dbReference>
<dbReference type="GO" id="GO:0007017">
    <property type="term" value="P:microtubule-based process"/>
    <property type="evidence" value="ECO:0000315"/>
    <property type="project" value="WormBase"/>
</dbReference>
<dbReference type="GO" id="GO:0000281">
    <property type="term" value="P:mitotic cytokinesis"/>
    <property type="evidence" value="ECO:0000315"/>
    <property type="project" value="WormBase"/>
</dbReference>
<dbReference type="GO" id="GO:0001556">
    <property type="term" value="P:oocyte maturation"/>
    <property type="evidence" value="ECO:0000303"/>
    <property type="project" value="ComplexPortal"/>
</dbReference>
<dbReference type="GO" id="GO:1903864">
    <property type="term" value="P:P granule disassembly"/>
    <property type="evidence" value="ECO:0000315"/>
    <property type="project" value="WormBase"/>
</dbReference>
<dbReference type="GO" id="GO:0018108">
    <property type="term" value="P:peptidyl-tyrosine phosphorylation"/>
    <property type="evidence" value="ECO:0000315"/>
    <property type="project" value="UniProtKB"/>
</dbReference>
<dbReference type="GO" id="GO:0032436">
    <property type="term" value="P:positive regulation of proteasomal ubiquitin-dependent protein catabolic process"/>
    <property type="evidence" value="ECO:0000315"/>
    <property type="project" value="WormBase"/>
</dbReference>
<dbReference type="GO" id="GO:0045732">
    <property type="term" value="P:positive regulation of protein catabolic process"/>
    <property type="evidence" value="ECO:0000315"/>
    <property type="project" value="WormBase"/>
</dbReference>
<dbReference type="CDD" id="cd14224">
    <property type="entry name" value="PKc_DYRK2_3"/>
    <property type="match status" value="1"/>
</dbReference>
<dbReference type="FunFam" id="1.10.510.10:FF:000112">
    <property type="entry name" value="Putative dual specificity tyrosine-phosphorylation-regulated kinase 2"/>
    <property type="match status" value="1"/>
</dbReference>
<dbReference type="FunFam" id="3.30.200.20:FF:000127">
    <property type="entry name" value="Putative dual specificity tyrosine-phosphorylation-regulated kinase 2"/>
    <property type="match status" value="1"/>
</dbReference>
<dbReference type="Gene3D" id="3.30.10.30">
    <property type="entry name" value="DYRK"/>
    <property type="match status" value="1"/>
</dbReference>
<dbReference type="Gene3D" id="3.30.200.20">
    <property type="entry name" value="Phosphorylase Kinase, domain 1"/>
    <property type="match status" value="1"/>
</dbReference>
<dbReference type="Gene3D" id="1.10.510.10">
    <property type="entry name" value="Transferase(Phosphotransferase) domain 1"/>
    <property type="match status" value="1"/>
</dbReference>
<dbReference type="InterPro" id="IPR042521">
    <property type="entry name" value="DYRK"/>
</dbReference>
<dbReference type="InterPro" id="IPR011009">
    <property type="entry name" value="Kinase-like_dom_sf"/>
</dbReference>
<dbReference type="InterPro" id="IPR000719">
    <property type="entry name" value="Prot_kinase_dom"/>
</dbReference>
<dbReference type="InterPro" id="IPR017441">
    <property type="entry name" value="Protein_kinase_ATP_BS"/>
</dbReference>
<dbReference type="InterPro" id="IPR008271">
    <property type="entry name" value="Ser/Thr_kinase_AS"/>
</dbReference>
<dbReference type="InterPro" id="IPR050494">
    <property type="entry name" value="Ser_Thr_dual-spec_kinase"/>
</dbReference>
<dbReference type="PANTHER" id="PTHR24058">
    <property type="entry name" value="DUAL SPECIFICITY PROTEIN KINASE"/>
    <property type="match status" value="1"/>
</dbReference>
<dbReference type="PANTHER" id="PTHR24058:SF112">
    <property type="entry name" value="DUAL SPECIFICITY TYROSINE-PHOSPHORYLATION-REGULATED KINASE 3 HOMOLOG-RELATED"/>
    <property type="match status" value="1"/>
</dbReference>
<dbReference type="Pfam" id="PF00069">
    <property type="entry name" value="Pkinase"/>
    <property type="match status" value="1"/>
</dbReference>
<dbReference type="SMART" id="SM00220">
    <property type="entry name" value="S_TKc"/>
    <property type="match status" value="1"/>
</dbReference>
<dbReference type="SUPFAM" id="SSF56112">
    <property type="entry name" value="Protein kinase-like (PK-like)"/>
    <property type="match status" value="1"/>
</dbReference>
<dbReference type="PROSITE" id="PS00107">
    <property type="entry name" value="PROTEIN_KINASE_ATP"/>
    <property type="match status" value="1"/>
</dbReference>
<dbReference type="PROSITE" id="PS50011">
    <property type="entry name" value="PROTEIN_KINASE_DOM"/>
    <property type="match status" value="1"/>
</dbReference>
<dbReference type="PROSITE" id="PS00108">
    <property type="entry name" value="PROTEIN_KINASE_ST"/>
    <property type="match status" value="1"/>
</dbReference>
<sequence length="817" mass="89885">MAALASFTRNSRSYGQQPIDVTQQGQRDRSVMSLDAQGRSVSHECPTSTTLVRQLYLPQIPQSASFAAAPTSFSGASSSSSNHHHPVYHSQNSLPPNLLGSSQNSASSNSLVQGHRNPALGSGNTLTRSYHQPSSTNSSTNNLYGPLGTISRDLKQSIRDISPPVINSSANPHLVNYVQTSSFDNGSYEFPSGQAQQQRRLGGSQQHLAPLQQTASSLYSNPQSSSSQLLGQQQAVRPNYAYQQSLPRQQHINSHQTQAFFGTVRGPTNSTNIVTPLRASKTMIDVLAPVRDTVAAQATGLPNVGTSSSNGSSNSSSGVGSGGSGSLMTQSIGGPNKHLSASHSTLNTASTHDMMHSKIPKSPSNESLSRSHTSSSGGSQGGHNSNSGSNSGFRPEDAVQTFGAKLVPFEKNEIYNYTRVFFVGSHAKKQAGVIGGANNGGYDDENGSYQLVVHDHIAYRYEVLKVIGKGSFGQVIKAFDHKYQQYVALKLVRNEKRFHRQADEEIRILDHLRRQDSDGTHNIIHMLDYFNFRNHKCITFELLSINLYELIKRNKFQGFSLMLVRKFAYSMLLCLDLLQKNRLIHCDLKPENVLLKQQGRSGIKVIDFGSSCFDDQRIYTYIQSRFYRAPEVILGTKYGMPIDMWSLGCILAELLTGYPLLPGEDENDQLALIIELLGMPPPKSLETAKRARTFITSKGYPRYCTATSMPDGSVVLAGARSKRGKMRGPPASRSWSTALKNMGDELFVDFLKRCLDWDPETRMTPAQALKHKWLRRRLPNPPRDGLESMGGLADHEKKTETLPNIDSNANILMRKKF</sequence>
<keyword id="KW-0025">Alternative splicing</keyword>
<keyword id="KW-0067">ATP-binding</keyword>
<keyword id="KW-0963">Cytoplasm</keyword>
<keyword id="KW-0217">Developmental protein</keyword>
<keyword id="KW-0418">Kinase</keyword>
<keyword id="KW-0460">Magnesium</keyword>
<keyword id="KW-0547">Nucleotide-binding</keyword>
<keyword id="KW-0597">Phosphoprotein</keyword>
<keyword id="KW-1185">Reference proteome</keyword>
<keyword id="KW-0723">Serine/threonine-protein kinase</keyword>
<keyword id="KW-0808">Transferase</keyword>
<keyword id="KW-0829">Tyrosine-protein kinase</keyword>
<name>MBK2_CAEEL</name>
<evidence type="ECO:0000250" key="1">
    <source>
        <dbReference type="UniProtKB" id="P28523"/>
    </source>
</evidence>
<evidence type="ECO:0000250" key="2">
    <source>
        <dbReference type="UniProtKB" id="Q13627"/>
    </source>
</evidence>
<evidence type="ECO:0000255" key="3"/>
<evidence type="ECO:0000255" key="4">
    <source>
        <dbReference type="PROSITE-ProRule" id="PRU00159"/>
    </source>
</evidence>
<evidence type="ECO:0000255" key="5">
    <source>
        <dbReference type="PROSITE-ProRule" id="PRU10027"/>
    </source>
</evidence>
<evidence type="ECO:0000256" key="6">
    <source>
        <dbReference type="SAM" id="MobiDB-lite"/>
    </source>
</evidence>
<evidence type="ECO:0000269" key="7">
    <source>
    </source>
</evidence>
<evidence type="ECO:0000269" key="8">
    <source>
    </source>
</evidence>
<evidence type="ECO:0000269" key="9">
    <source>
    </source>
</evidence>
<evidence type="ECO:0000269" key="10">
    <source>
    </source>
</evidence>
<evidence type="ECO:0000269" key="11">
    <source>
    </source>
</evidence>
<evidence type="ECO:0000269" key="12">
    <source>
    </source>
</evidence>
<evidence type="ECO:0000269" key="13">
    <source>
    </source>
</evidence>
<evidence type="ECO:0000269" key="14">
    <source>
    </source>
</evidence>
<evidence type="ECO:0000269" key="15">
    <source>
    </source>
</evidence>
<evidence type="ECO:0000269" key="16">
    <source>
    </source>
</evidence>
<evidence type="ECO:0000303" key="17">
    <source>
    </source>
</evidence>
<evidence type="ECO:0000303" key="18">
    <source>
    </source>
</evidence>
<evidence type="ECO:0000303" key="19">
    <source>
    </source>
</evidence>
<evidence type="ECO:0000305" key="20"/>
<evidence type="ECO:0000305" key="21">
    <source>
    </source>
</evidence>
<evidence type="ECO:0000312" key="22">
    <source>
        <dbReference type="EMBL" id="AAM09088.1"/>
    </source>
</evidence>
<evidence type="ECO:0000312" key="23">
    <source>
        <dbReference type="EMBL" id="CAA94353.1"/>
    </source>
</evidence>
<evidence type="ECO:0000312" key="24">
    <source>
        <dbReference type="WormBase" id="F49E11.1b"/>
    </source>
</evidence>
<proteinExistence type="evidence at protein level"/>